<proteinExistence type="evidence at transcript level"/>
<feature type="chain" id="PRO_0000376442" description="Probable cell division protein WhiA">
    <location>
        <begin position="1"/>
        <end position="316"/>
    </location>
</feature>
<feature type="DNA-binding region" description="H-T-H motif" evidence="1">
    <location>
        <begin position="275"/>
        <end position="309"/>
    </location>
</feature>
<organism>
    <name type="scientific">Bacillus subtilis (strain 168)</name>
    <dbReference type="NCBI Taxonomy" id="224308"/>
    <lineage>
        <taxon>Bacteria</taxon>
        <taxon>Bacillati</taxon>
        <taxon>Bacillota</taxon>
        <taxon>Bacilli</taxon>
        <taxon>Bacillales</taxon>
        <taxon>Bacillaceae</taxon>
        <taxon>Bacillus</taxon>
    </lineage>
</organism>
<protein>
    <recommendedName>
        <fullName evidence="1 5">Probable cell division protein WhiA</fullName>
    </recommendedName>
</protein>
<name>WHIA_BACSU</name>
<accession>O06975</accession>
<accession>Q795F9</accession>
<dbReference type="EMBL" id="Z94043">
    <property type="protein sequence ID" value="CAB08059.1"/>
    <property type="molecule type" value="Genomic_DNA"/>
</dbReference>
<dbReference type="EMBL" id="AL009126">
    <property type="protein sequence ID" value="CAB15480.1"/>
    <property type="molecule type" value="Genomic_DNA"/>
</dbReference>
<dbReference type="PIR" id="B70032">
    <property type="entry name" value="B70032"/>
</dbReference>
<dbReference type="RefSeq" id="NP_391355.1">
    <property type="nucleotide sequence ID" value="NC_000964.3"/>
</dbReference>
<dbReference type="RefSeq" id="WP_003243775.1">
    <property type="nucleotide sequence ID" value="NZ_OZ025638.1"/>
</dbReference>
<dbReference type="SMR" id="O06975"/>
<dbReference type="FunCoup" id="O06975">
    <property type="interactions" value="50"/>
</dbReference>
<dbReference type="STRING" id="224308.BSU34750"/>
<dbReference type="PaxDb" id="224308-BSU34750"/>
<dbReference type="DNASU" id="936540"/>
<dbReference type="EnsemblBacteria" id="CAB15480">
    <property type="protein sequence ID" value="CAB15480"/>
    <property type="gene ID" value="BSU_34750"/>
</dbReference>
<dbReference type="GeneID" id="86871920"/>
<dbReference type="GeneID" id="936540"/>
<dbReference type="KEGG" id="bsu:BSU34750"/>
<dbReference type="PATRIC" id="fig|224308.179.peg.3763"/>
<dbReference type="eggNOG" id="COG1481">
    <property type="taxonomic scope" value="Bacteria"/>
</dbReference>
<dbReference type="InParanoid" id="O06975"/>
<dbReference type="OrthoDB" id="401278at2"/>
<dbReference type="PhylomeDB" id="O06975"/>
<dbReference type="BioCyc" id="BSUB:BSU34750-MONOMER"/>
<dbReference type="Proteomes" id="UP000001570">
    <property type="component" value="Chromosome"/>
</dbReference>
<dbReference type="GO" id="GO:0005737">
    <property type="term" value="C:cytoplasm"/>
    <property type="evidence" value="ECO:0007669"/>
    <property type="project" value="UniProtKB-KW"/>
</dbReference>
<dbReference type="GO" id="GO:0009295">
    <property type="term" value="C:nucleoid"/>
    <property type="evidence" value="ECO:0007669"/>
    <property type="project" value="UniProtKB-SubCell"/>
</dbReference>
<dbReference type="GO" id="GO:0003677">
    <property type="term" value="F:DNA binding"/>
    <property type="evidence" value="ECO:0007669"/>
    <property type="project" value="UniProtKB-UniRule"/>
</dbReference>
<dbReference type="GO" id="GO:0051301">
    <property type="term" value="P:cell division"/>
    <property type="evidence" value="ECO:0007669"/>
    <property type="project" value="UniProtKB-UniRule"/>
</dbReference>
<dbReference type="GO" id="GO:0043937">
    <property type="term" value="P:regulation of sporulation"/>
    <property type="evidence" value="ECO:0000318"/>
    <property type="project" value="GO_Central"/>
</dbReference>
<dbReference type="FunFam" id="3.10.28.10:FF:000002">
    <property type="entry name" value="Probable cell division protein WhiA"/>
    <property type="match status" value="1"/>
</dbReference>
<dbReference type="Gene3D" id="3.10.28.10">
    <property type="entry name" value="Homing endonucleases"/>
    <property type="match status" value="1"/>
</dbReference>
<dbReference type="HAMAP" id="MF_01420">
    <property type="entry name" value="HTH_type_WhiA"/>
    <property type="match status" value="1"/>
</dbReference>
<dbReference type="InterPro" id="IPR027434">
    <property type="entry name" value="Homing_endonucl"/>
</dbReference>
<dbReference type="InterPro" id="IPR018478">
    <property type="entry name" value="Sporu_reg_WhiA_N_dom"/>
</dbReference>
<dbReference type="InterPro" id="IPR003802">
    <property type="entry name" value="Sporulation_regulator_WhiA"/>
</dbReference>
<dbReference type="InterPro" id="IPR023054">
    <property type="entry name" value="Sporulation_regulator_WhiA_C"/>
</dbReference>
<dbReference type="InterPro" id="IPR039518">
    <property type="entry name" value="WhiA_LAGLIDADG_dom"/>
</dbReference>
<dbReference type="NCBIfam" id="TIGR00647">
    <property type="entry name" value="DNA_bind_WhiA"/>
    <property type="match status" value="1"/>
</dbReference>
<dbReference type="PANTHER" id="PTHR37307">
    <property type="entry name" value="CELL DIVISION PROTEIN WHIA-RELATED"/>
    <property type="match status" value="1"/>
</dbReference>
<dbReference type="PANTHER" id="PTHR37307:SF1">
    <property type="entry name" value="CELL DIVISION PROTEIN WHIA-RELATED"/>
    <property type="match status" value="1"/>
</dbReference>
<dbReference type="Pfam" id="PF02650">
    <property type="entry name" value="HTH_WhiA"/>
    <property type="match status" value="1"/>
</dbReference>
<dbReference type="Pfam" id="PF14527">
    <property type="entry name" value="LAGLIDADG_WhiA"/>
    <property type="match status" value="1"/>
</dbReference>
<dbReference type="Pfam" id="PF10298">
    <property type="entry name" value="WhiA_N"/>
    <property type="match status" value="1"/>
</dbReference>
<dbReference type="SUPFAM" id="SSF55608">
    <property type="entry name" value="Homing endonucleases"/>
    <property type="match status" value="1"/>
</dbReference>
<evidence type="ECO:0000255" key="1">
    <source>
        <dbReference type="HAMAP-Rule" id="MF_01420"/>
    </source>
</evidence>
<evidence type="ECO:0000269" key="2">
    <source>
    </source>
</evidence>
<evidence type="ECO:0000269" key="3">
    <source>
    </source>
</evidence>
<evidence type="ECO:0000303" key="4">
    <source>
    </source>
</evidence>
<evidence type="ECO:0000305" key="5"/>
<sequence>MSFASETKKELTNLEVKDCCINAELSALIRMNGALSFTNRHLVLDVQTENAAIARRIYTLLKKQYDVSVELLVRKKMRLKKNNVYIVRFSENAKAILEDLKILGENFVFERSISKELVKKRCCKRSYMRGAFLAGGSVNNPETSSYHLEIFSLYKEHNDSLCDLLNEFQLNSKTLERKKGYITYLKEAEKITEFLNVIGAHNSLLRFEDVRIVRDMRNSVNRLVNCETANLNKTIGASLRQVENIKYIDERIGLEALPEKLREIAQLRIDYQEVTLKELGEMVASGKISKSGINHRLRKLDEIAEQLRTGQTVTLK</sequence>
<keyword id="KW-0131">Cell cycle</keyword>
<keyword id="KW-0132">Cell division</keyword>
<keyword id="KW-0963">Cytoplasm</keyword>
<keyword id="KW-0238">DNA-binding</keyword>
<keyword id="KW-1185">Reference proteome</keyword>
<reference key="1">
    <citation type="submission" date="1997-04" db="EMBL/GenBank/DDBJ databases">
        <authorList>
            <person name="Denizot F."/>
        </authorList>
    </citation>
    <scope>NUCLEOTIDE SEQUENCE [GENOMIC DNA]</scope>
</reference>
<reference key="2">
    <citation type="journal article" date="1997" name="Nature">
        <title>The complete genome sequence of the Gram-positive bacterium Bacillus subtilis.</title>
        <authorList>
            <person name="Kunst F."/>
            <person name="Ogasawara N."/>
            <person name="Moszer I."/>
            <person name="Albertini A.M."/>
            <person name="Alloni G."/>
            <person name="Azevedo V."/>
            <person name="Bertero M.G."/>
            <person name="Bessieres P."/>
            <person name="Bolotin A."/>
            <person name="Borchert S."/>
            <person name="Borriss R."/>
            <person name="Boursier L."/>
            <person name="Brans A."/>
            <person name="Braun M."/>
            <person name="Brignell S.C."/>
            <person name="Bron S."/>
            <person name="Brouillet S."/>
            <person name="Bruschi C.V."/>
            <person name="Caldwell B."/>
            <person name="Capuano V."/>
            <person name="Carter N.M."/>
            <person name="Choi S.-K."/>
            <person name="Codani J.-J."/>
            <person name="Connerton I.F."/>
            <person name="Cummings N.J."/>
            <person name="Daniel R.A."/>
            <person name="Denizot F."/>
            <person name="Devine K.M."/>
            <person name="Duesterhoeft A."/>
            <person name="Ehrlich S.D."/>
            <person name="Emmerson P.T."/>
            <person name="Entian K.-D."/>
            <person name="Errington J."/>
            <person name="Fabret C."/>
            <person name="Ferrari E."/>
            <person name="Foulger D."/>
            <person name="Fritz C."/>
            <person name="Fujita M."/>
            <person name="Fujita Y."/>
            <person name="Fuma S."/>
            <person name="Galizzi A."/>
            <person name="Galleron N."/>
            <person name="Ghim S.-Y."/>
            <person name="Glaser P."/>
            <person name="Goffeau A."/>
            <person name="Golightly E.J."/>
            <person name="Grandi G."/>
            <person name="Guiseppi G."/>
            <person name="Guy B.J."/>
            <person name="Haga K."/>
            <person name="Haiech J."/>
            <person name="Harwood C.R."/>
            <person name="Henaut A."/>
            <person name="Hilbert H."/>
            <person name="Holsappel S."/>
            <person name="Hosono S."/>
            <person name="Hullo M.-F."/>
            <person name="Itaya M."/>
            <person name="Jones L.-M."/>
            <person name="Joris B."/>
            <person name="Karamata D."/>
            <person name="Kasahara Y."/>
            <person name="Klaerr-Blanchard M."/>
            <person name="Klein C."/>
            <person name="Kobayashi Y."/>
            <person name="Koetter P."/>
            <person name="Koningstein G."/>
            <person name="Krogh S."/>
            <person name="Kumano M."/>
            <person name="Kurita K."/>
            <person name="Lapidus A."/>
            <person name="Lardinois S."/>
            <person name="Lauber J."/>
            <person name="Lazarevic V."/>
            <person name="Lee S.-M."/>
            <person name="Levine A."/>
            <person name="Liu H."/>
            <person name="Masuda S."/>
            <person name="Mauel C."/>
            <person name="Medigue C."/>
            <person name="Medina N."/>
            <person name="Mellado R.P."/>
            <person name="Mizuno M."/>
            <person name="Moestl D."/>
            <person name="Nakai S."/>
            <person name="Noback M."/>
            <person name="Noone D."/>
            <person name="O'Reilly M."/>
            <person name="Ogawa K."/>
            <person name="Ogiwara A."/>
            <person name="Oudega B."/>
            <person name="Park S.-H."/>
            <person name="Parro V."/>
            <person name="Pohl T.M."/>
            <person name="Portetelle D."/>
            <person name="Porwollik S."/>
            <person name="Prescott A.M."/>
            <person name="Presecan E."/>
            <person name="Pujic P."/>
            <person name="Purnelle B."/>
            <person name="Rapoport G."/>
            <person name="Rey M."/>
            <person name="Reynolds S."/>
            <person name="Rieger M."/>
            <person name="Rivolta C."/>
            <person name="Rocha E."/>
            <person name="Roche B."/>
            <person name="Rose M."/>
            <person name="Sadaie Y."/>
            <person name="Sato T."/>
            <person name="Scanlan E."/>
            <person name="Schleich S."/>
            <person name="Schroeter R."/>
            <person name="Scoffone F."/>
            <person name="Sekiguchi J."/>
            <person name="Sekowska A."/>
            <person name="Seror S.J."/>
            <person name="Serror P."/>
            <person name="Shin B.-S."/>
            <person name="Soldo B."/>
            <person name="Sorokin A."/>
            <person name="Tacconi E."/>
            <person name="Takagi T."/>
            <person name="Takahashi H."/>
            <person name="Takemaru K."/>
            <person name="Takeuchi M."/>
            <person name="Tamakoshi A."/>
            <person name="Tanaka T."/>
            <person name="Terpstra P."/>
            <person name="Tognoni A."/>
            <person name="Tosato V."/>
            <person name="Uchiyama S."/>
            <person name="Vandenbol M."/>
            <person name="Vannier F."/>
            <person name="Vassarotti A."/>
            <person name="Viari A."/>
            <person name="Wambutt R."/>
            <person name="Wedler E."/>
            <person name="Wedler H."/>
            <person name="Weitzenegger T."/>
            <person name="Winters P."/>
            <person name="Wipat A."/>
            <person name="Yamamoto H."/>
            <person name="Yamane K."/>
            <person name="Yasumoto K."/>
            <person name="Yata K."/>
            <person name="Yoshida K."/>
            <person name="Yoshikawa H.-F."/>
            <person name="Zumstein E."/>
            <person name="Yoshikawa H."/>
            <person name="Danchin A."/>
        </authorList>
    </citation>
    <scope>NUCLEOTIDE SEQUENCE [LARGE SCALE GENOMIC DNA]</scope>
    <source>
        <strain>168</strain>
    </source>
</reference>
<reference key="3">
    <citation type="journal article" date="2013" name="J. Bacteriol.">
        <title>The conserved DNA-binding protein WhiA is involved in cell division in Bacillus subtilis.</title>
        <authorList>
            <person name="Surdova K."/>
            <person name="Gamba P."/>
            <person name="Claessen D."/>
            <person name="Siersma T."/>
            <person name="Jonker M.J."/>
            <person name="Errington J."/>
            <person name="Hamoen L.W."/>
        </authorList>
    </citation>
    <scope>FUNCTION</scope>
    <scope>SUBCELLULAR LOCATION</scope>
    <scope>INDUCTION</scope>
    <scope>DISRUPTION PHENOTYPE</scope>
</reference>
<reference key="4">
    <citation type="journal article" date="2018" name="J. Bacteriol.">
        <title>The conserved DNA binding protein WhiA influences chromosome segregation in Bacillus subtilis.</title>
        <authorList>
            <person name="Bohorquez L.C."/>
            <person name="Surdova K."/>
            <person name="Jonker M.J."/>
            <person name="Hamoen L.W."/>
        </authorList>
    </citation>
    <scope>FUNCTION</scope>
    <scope>DISRUPTION PHENOTYPE</scope>
</reference>
<gene>
    <name evidence="1 4" type="primary">whiA</name>
    <name type="synonym">yvcL</name>
    <name type="ordered locus">BSU34750</name>
</gene>
<comment type="function">
    <text evidence="2 3">Involved in cell division and chromosome segregation (PubMed:24097947, PubMed:29378890). May influence the activity of FtsZ (PubMed:24097947). Binds DNA, but does not seem to function as a transcription factor (PubMed:24097947).</text>
</comment>
<comment type="subcellular location">
    <subcellularLocation>
        <location evidence="2">Cytoplasm</location>
        <location evidence="2">Nucleoid</location>
    </subcellularLocation>
</comment>
<comment type="induction">
    <text evidence="2">Constitutively expressed throughout the growth phase.</text>
</comment>
<comment type="disruption phenotype">
    <text evidence="2 3">Mutant grows slower and cells are longer compared to the wild-type strain. Mutation has a relatively mild effect on the sporulation. Mutant is sensitive to reduced FtsZ concentrations. Deletion of the gene in a zapA mutant background results in very filamentous cells that are blocked in proper Z-ring formation (PubMed:24097947). Mutant shows increased internucleoid distances (PubMed:29378890).</text>
</comment>
<comment type="similarity">
    <text evidence="1">Belongs to the WhiA family.</text>
</comment>